<name>VPHE_NPVLD</name>
<dbReference type="EMBL" id="D37947">
    <property type="protein sequence ID" value="BAA07164.1"/>
    <property type="molecule type" value="Genomic_DNA"/>
</dbReference>
<dbReference type="PIR" id="JQ1559">
    <property type="entry name" value="JQ1559"/>
</dbReference>
<dbReference type="SMR" id="P36865"/>
<dbReference type="GO" id="GO:0016020">
    <property type="term" value="C:membrane"/>
    <property type="evidence" value="ECO:0007669"/>
    <property type="project" value="UniProtKB-KW"/>
</dbReference>
<dbReference type="GO" id="GO:0019028">
    <property type="term" value="C:viral capsid"/>
    <property type="evidence" value="ECO:0007669"/>
    <property type="project" value="InterPro"/>
</dbReference>
<dbReference type="GO" id="GO:0019031">
    <property type="term" value="C:viral envelope"/>
    <property type="evidence" value="ECO:0007669"/>
    <property type="project" value="UniProtKB-KW"/>
</dbReference>
<dbReference type="GO" id="GO:0039679">
    <property type="term" value="C:viral occlusion body"/>
    <property type="evidence" value="ECO:0007669"/>
    <property type="project" value="UniProtKB-KW"/>
</dbReference>
<dbReference type="GO" id="GO:0055036">
    <property type="term" value="C:virion membrane"/>
    <property type="evidence" value="ECO:0007669"/>
    <property type="project" value="UniProtKB-SubCell"/>
</dbReference>
<dbReference type="GO" id="GO:0005198">
    <property type="term" value="F:structural molecule activity"/>
    <property type="evidence" value="ECO:0007669"/>
    <property type="project" value="InterPro"/>
</dbReference>
<dbReference type="InterPro" id="IPR007601">
    <property type="entry name" value="Baculo_PEP_C"/>
</dbReference>
<dbReference type="Pfam" id="PF04513">
    <property type="entry name" value="Baculo_PEP_C"/>
    <property type="match status" value="1"/>
</dbReference>
<comment type="function">
    <text>Major component of the polyhedra envelope.</text>
</comment>
<comment type="subcellular location">
    <subcellularLocation>
        <location evidence="1">Virion membrane</location>
    </subcellularLocation>
</comment>
<comment type="similarity">
    <text evidence="2">Belongs to the baculoviridae PE family.</text>
</comment>
<protein>
    <recommendedName>
        <fullName>Polyhedral envelope protein</fullName>
        <shortName>PE</shortName>
    </recommendedName>
    <alternativeName>
        <fullName>Polyhedral calyx protein</fullName>
    </alternativeName>
</protein>
<evidence type="ECO:0000250" key="1"/>
<evidence type="ECO:0000305" key="2"/>
<feature type="chain" id="PRO_0000132938" description="Polyhedral envelope protein">
    <location>
        <begin position="1"/>
        <end position="312"/>
    </location>
</feature>
<organism>
    <name type="scientific">Lymantria dispar multicapsid nuclear polyhedrosis virus</name>
    <name type="common">LdMNPV</name>
    <dbReference type="NCBI Taxonomy" id="10449"/>
    <lineage>
        <taxon>Viruses</taxon>
        <taxon>Viruses incertae sedis</taxon>
        <taxon>Naldaviricetes</taxon>
        <taxon>Lefavirales</taxon>
        <taxon>Baculoviridae</taxon>
        <taxon>Alphabaculovirus</taxon>
        <taxon>Alphabaculovirus lydisparis</taxon>
    </lineage>
</organism>
<keyword id="KW-0472">Membrane</keyword>
<keyword id="KW-0261">Viral envelope protein</keyword>
<keyword id="KW-0842">Viral occlusion body</keyword>
<keyword id="KW-0946">Virion</keyword>
<organismHost>
    <name type="scientific">Lepidoptera</name>
    <name type="common">butterflies and moths</name>
    <dbReference type="NCBI Taxonomy" id="7088"/>
</organismHost>
<proteinExistence type="inferred from homology"/>
<reference key="1">
    <citation type="journal article" date="1992" name="J. Gen. Virol.">
        <title>Nucleotide sequence of the polyhedron envelope protein gene region of the Lymantria dispar nuclear polyhedrosis virus.</title>
        <authorList>
            <person name="Bjoernson R.M."/>
            <person name="Rohrmann G.F."/>
        </authorList>
    </citation>
    <scope>NUCLEOTIDE SEQUENCE [GENOMIC DNA]</scope>
</reference>
<sequence length="312" mass="33827">MSAPHNVLTKKNPRRGRFAFPRRRVRAGSIDEVVQLLRLPANIANGIHTRHKKCWNDFRGGGGGGGGSRVDGTRAFVDLYGLGYLCNRTNSTLADYLCTLFVAEAYRDACCAQPPAPFPDYNASPPDCRPPLPPQPPCKPNDSELLDRIVRQNDLILNGLNQLCLNHSNHHFELSNILNSIKLQNVNIINQLSQIFDDGVLSGLDEKLSRLIADLDGHFADFGSALDAALAQLQDSLRNDLTNINSILANLTSSLTNINSTINNLLQTLQNLGLGEVGAKLNDVQSTVDRILGVLTPEIVAAAAAAAAKRAH</sequence>
<accession>P36865</accession>